<feature type="chain" id="PRO_1000119994" description="UPF0145 protein YbjQ">
    <location>
        <begin position="1"/>
        <end position="107"/>
    </location>
</feature>
<name>YBJQ_ECOLU</name>
<evidence type="ECO:0000255" key="1">
    <source>
        <dbReference type="HAMAP-Rule" id="MF_00338"/>
    </source>
</evidence>
<accession>B7NAL7</accession>
<gene>
    <name evidence="1" type="primary">ybjQ</name>
    <name type="ordered locus">ECUMN_1061</name>
</gene>
<organism>
    <name type="scientific">Escherichia coli O17:K52:H18 (strain UMN026 / ExPEC)</name>
    <dbReference type="NCBI Taxonomy" id="585056"/>
    <lineage>
        <taxon>Bacteria</taxon>
        <taxon>Pseudomonadati</taxon>
        <taxon>Pseudomonadota</taxon>
        <taxon>Gammaproteobacteria</taxon>
        <taxon>Enterobacterales</taxon>
        <taxon>Enterobacteriaceae</taxon>
        <taxon>Escherichia</taxon>
    </lineage>
</organism>
<dbReference type="EMBL" id="CU928163">
    <property type="protein sequence ID" value="CAR12270.1"/>
    <property type="molecule type" value="Genomic_DNA"/>
</dbReference>
<dbReference type="RefSeq" id="WP_001160737.1">
    <property type="nucleotide sequence ID" value="NC_011751.1"/>
</dbReference>
<dbReference type="RefSeq" id="YP_002411814.1">
    <property type="nucleotide sequence ID" value="NC_011751.1"/>
</dbReference>
<dbReference type="SMR" id="B7NAL7"/>
<dbReference type="STRING" id="585056.ECUMN_1061"/>
<dbReference type="KEGG" id="eum:ECUMN_1061"/>
<dbReference type="PATRIC" id="fig|585056.7.peg.1254"/>
<dbReference type="HOGENOM" id="CLU_117144_3_0_6"/>
<dbReference type="Proteomes" id="UP000007097">
    <property type="component" value="Chromosome"/>
</dbReference>
<dbReference type="Gene3D" id="3.30.110.70">
    <property type="entry name" value="Hypothetical protein apc22750. Chain B"/>
    <property type="match status" value="1"/>
</dbReference>
<dbReference type="HAMAP" id="MF_00338">
    <property type="entry name" value="UPF0145"/>
    <property type="match status" value="1"/>
</dbReference>
<dbReference type="InterPro" id="IPR035439">
    <property type="entry name" value="UPF0145_dom_sf"/>
</dbReference>
<dbReference type="InterPro" id="IPR002765">
    <property type="entry name" value="UPF0145_YbjQ-like"/>
</dbReference>
<dbReference type="NCBIfam" id="NF002776">
    <property type="entry name" value="PRK02877.1"/>
    <property type="match status" value="1"/>
</dbReference>
<dbReference type="PANTHER" id="PTHR34068">
    <property type="entry name" value="UPF0145 PROTEIN YBJQ"/>
    <property type="match status" value="1"/>
</dbReference>
<dbReference type="PANTHER" id="PTHR34068:SF1">
    <property type="entry name" value="UPF0145 PROTEIN YBJQ"/>
    <property type="match status" value="1"/>
</dbReference>
<dbReference type="Pfam" id="PF01906">
    <property type="entry name" value="YbjQ_1"/>
    <property type="match status" value="1"/>
</dbReference>
<dbReference type="SUPFAM" id="SSF117782">
    <property type="entry name" value="YbjQ-like"/>
    <property type="match status" value="1"/>
</dbReference>
<comment type="similarity">
    <text evidence="1">Belongs to the UPF0145 family.</text>
</comment>
<protein>
    <recommendedName>
        <fullName evidence="1">UPF0145 protein YbjQ</fullName>
    </recommendedName>
</protein>
<proteinExistence type="inferred from homology"/>
<reference key="1">
    <citation type="journal article" date="2009" name="PLoS Genet.">
        <title>Organised genome dynamics in the Escherichia coli species results in highly diverse adaptive paths.</title>
        <authorList>
            <person name="Touchon M."/>
            <person name="Hoede C."/>
            <person name="Tenaillon O."/>
            <person name="Barbe V."/>
            <person name="Baeriswyl S."/>
            <person name="Bidet P."/>
            <person name="Bingen E."/>
            <person name="Bonacorsi S."/>
            <person name="Bouchier C."/>
            <person name="Bouvet O."/>
            <person name="Calteau A."/>
            <person name="Chiapello H."/>
            <person name="Clermont O."/>
            <person name="Cruveiller S."/>
            <person name="Danchin A."/>
            <person name="Diard M."/>
            <person name="Dossat C."/>
            <person name="Karoui M.E."/>
            <person name="Frapy E."/>
            <person name="Garry L."/>
            <person name="Ghigo J.M."/>
            <person name="Gilles A.M."/>
            <person name="Johnson J."/>
            <person name="Le Bouguenec C."/>
            <person name="Lescat M."/>
            <person name="Mangenot S."/>
            <person name="Martinez-Jehanne V."/>
            <person name="Matic I."/>
            <person name="Nassif X."/>
            <person name="Oztas S."/>
            <person name="Petit M.A."/>
            <person name="Pichon C."/>
            <person name="Rouy Z."/>
            <person name="Ruf C.S."/>
            <person name="Schneider D."/>
            <person name="Tourret J."/>
            <person name="Vacherie B."/>
            <person name="Vallenet D."/>
            <person name="Medigue C."/>
            <person name="Rocha E.P.C."/>
            <person name="Denamur E."/>
        </authorList>
    </citation>
    <scope>NUCLEOTIDE SEQUENCE [LARGE SCALE GENOMIC DNA]</scope>
    <source>
        <strain>UMN026 / ExPEC</strain>
    </source>
</reference>
<sequence>MQFSTTPTLEGQTIVEYCGVVTGEAILGANIFRDFFAGIRDIVGGRSGAYEKELRKAREIAFEELGSQARALGADAVVGIDIDYETVGQNGSMLMVSVSGTAVKTRR</sequence>